<evidence type="ECO:0000250" key="1">
    <source>
        <dbReference type="UniProtKB" id="Q9C0D9"/>
    </source>
</evidence>
<evidence type="ECO:0000255" key="2"/>
<evidence type="ECO:0000305" key="3"/>
<dbReference type="EC" id="2.7.8.1" evidence="1"/>
<dbReference type="EMBL" id="CR926492">
    <property type="protein sequence ID" value="CAI30284.1"/>
    <property type="molecule type" value="mRNA"/>
</dbReference>
<dbReference type="RefSeq" id="NP_001127136.1">
    <property type="nucleotide sequence ID" value="NM_001133664.1"/>
</dbReference>
<dbReference type="FunCoup" id="Q5NV96">
    <property type="interactions" value="1267"/>
</dbReference>
<dbReference type="STRING" id="9601.ENSPPYP00000014048"/>
<dbReference type="GeneID" id="100174185"/>
<dbReference type="KEGG" id="pon:100174185"/>
<dbReference type="CTD" id="85465"/>
<dbReference type="eggNOG" id="KOG2877">
    <property type="taxonomic scope" value="Eukaryota"/>
</dbReference>
<dbReference type="InParanoid" id="Q5NV96"/>
<dbReference type="OrthoDB" id="196717at2759"/>
<dbReference type="UniPathway" id="UPA00558">
    <property type="reaction ID" value="UER00743"/>
</dbReference>
<dbReference type="Proteomes" id="UP000001595">
    <property type="component" value="Unplaced"/>
</dbReference>
<dbReference type="GO" id="GO:0005789">
    <property type="term" value="C:endoplasmic reticulum membrane"/>
    <property type="evidence" value="ECO:0007669"/>
    <property type="project" value="UniProtKB-SubCell"/>
</dbReference>
<dbReference type="GO" id="GO:0005794">
    <property type="term" value="C:Golgi apparatus"/>
    <property type="evidence" value="ECO:0007669"/>
    <property type="project" value="TreeGrafter"/>
</dbReference>
<dbReference type="GO" id="GO:0004307">
    <property type="term" value="F:ethanolaminephosphotransferase activity"/>
    <property type="evidence" value="ECO:0000250"/>
    <property type="project" value="UniProtKB"/>
</dbReference>
<dbReference type="GO" id="GO:0046872">
    <property type="term" value="F:metal ion binding"/>
    <property type="evidence" value="ECO:0007669"/>
    <property type="project" value="UniProtKB-KW"/>
</dbReference>
<dbReference type="GO" id="GO:0006646">
    <property type="term" value="P:phosphatidylethanolamine biosynthetic process"/>
    <property type="evidence" value="ECO:0000250"/>
    <property type="project" value="UniProtKB"/>
</dbReference>
<dbReference type="FunFam" id="1.20.120.1760:FF:000006">
    <property type="entry name" value="Putative ethanolaminephosphotransferase 1"/>
    <property type="match status" value="1"/>
</dbReference>
<dbReference type="Gene3D" id="1.20.120.1760">
    <property type="match status" value="1"/>
</dbReference>
<dbReference type="InterPro" id="IPR000462">
    <property type="entry name" value="CDP-OH_P_trans"/>
</dbReference>
<dbReference type="InterPro" id="IPR043130">
    <property type="entry name" value="CDP-OH_PTrfase_TM_dom"/>
</dbReference>
<dbReference type="InterPro" id="IPR048254">
    <property type="entry name" value="CDP_ALCOHOL_P_TRANSF_CS"/>
</dbReference>
<dbReference type="InterPro" id="IPR014472">
    <property type="entry name" value="CHOPT"/>
</dbReference>
<dbReference type="PANTHER" id="PTHR10414">
    <property type="entry name" value="ETHANOLAMINEPHOSPHOTRANSFERASE"/>
    <property type="match status" value="1"/>
</dbReference>
<dbReference type="PANTHER" id="PTHR10414:SF47">
    <property type="entry name" value="ETHANOLAMINEPHOSPHOTRANSFERASE 1"/>
    <property type="match status" value="1"/>
</dbReference>
<dbReference type="Pfam" id="PF01066">
    <property type="entry name" value="CDP-OH_P_transf"/>
    <property type="match status" value="1"/>
</dbReference>
<dbReference type="PIRSF" id="PIRSF015665">
    <property type="entry name" value="CHOPT"/>
    <property type="match status" value="1"/>
</dbReference>
<dbReference type="PROSITE" id="PS00379">
    <property type="entry name" value="CDP_ALCOHOL_P_TRANSF"/>
    <property type="match status" value="1"/>
</dbReference>
<keyword id="KW-0007">Acetylation</keyword>
<keyword id="KW-0256">Endoplasmic reticulum</keyword>
<keyword id="KW-0444">Lipid biosynthesis</keyword>
<keyword id="KW-0443">Lipid metabolism</keyword>
<keyword id="KW-0460">Magnesium</keyword>
<keyword id="KW-0464">Manganese</keyword>
<keyword id="KW-0472">Membrane</keyword>
<keyword id="KW-0479">Metal-binding</keyword>
<keyword id="KW-0594">Phospholipid biosynthesis</keyword>
<keyword id="KW-1208">Phospholipid metabolism</keyword>
<keyword id="KW-1185">Reference proteome</keyword>
<keyword id="KW-0712">Selenocysteine</keyword>
<keyword id="KW-0808">Transferase</keyword>
<keyword id="KW-0812">Transmembrane</keyword>
<keyword id="KW-1133">Transmembrane helix</keyword>
<feature type="initiator methionine" description="Removed" evidence="1">
    <location>
        <position position="1"/>
    </location>
</feature>
<feature type="chain" id="PRO_0000056815" description="Ethanolaminephosphotransferase 1">
    <location>
        <begin position="2"/>
        <end position="397"/>
    </location>
</feature>
<feature type="transmembrane region" description="Helical" evidence="2">
    <location>
        <begin position="47"/>
        <end position="69"/>
    </location>
</feature>
<feature type="transmembrane region" description="Helical" evidence="2">
    <location>
        <begin position="84"/>
        <end position="103"/>
    </location>
</feature>
<feature type="transmembrane region" description="Helical" evidence="2">
    <location>
        <begin position="123"/>
        <end position="145"/>
    </location>
</feature>
<feature type="transmembrane region" description="Helical" evidence="2">
    <location>
        <begin position="150"/>
        <end position="172"/>
    </location>
</feature>
<feature type="transmembrane region" description="Helical" evidence="2">
    <location>
        <begin position="179"/>
        <end position="201"/>
    </location>
</feature>
<feature type="transmembrane region" description="Helical" evidence="2">
    <location>
        <begin position="221"/>
        <end position="243"/>
    </location>
</feature>
<feature type="transmembrane region" description="Helical" evidence="2">
    <location>
        <begin position="256"/>
        <end position="278"/>
    </location>
</feature>
<feature type="transmembrane region" description="Helical" evidence="2">
    <location>
        <begin position="291"/>
        <end position="310"/>
    </location>
</feature>
<feature type="transmembrane region" description="Helical" evidence="2">
    <location>
        <begin position="317"/>
        <end position="339"/>
    </location>
</feature>
<feature type="transmembrane region" description="Helical" evidence="2">
    <location>
        <begin position="344"/>
        <end position="366"/>
    </location>
</feature>
<feature type="non-standard amino acid" description="Selenocysteine" evidence="1">
    <location>
        <position position="387"/>
    </location>
</feature>
<feature type="modified residue" description="N-acetylalanine" evidence="1">
    <location>
        <position position="2"/>
    </location>
</feature>
<name>EPT1_PONAB</name>
<proteinExistence type="evidence at transcript level"/>
<accession>Q5NV96</accession>
<comment type="function">
    <text evidence="1">Ethanolaminephosphotransferase that catalyzes the transfer of phosphoethanolamine (PE) from CDP-ethanolamine to lipid acceptors, the final step in the synthesis of PE via the 'Kennedy' pathway. PE is the second most abundant phospholipid of membranes in mammals and is involved in various membrane-related cellular processes. The enzyme is critical for the synthesis of several PE species and also catalyzes the synthesis of plasmanyl-PE, a lipid required for proper myelination and neurodevelopment, from 1-alkyl-2-acylglycerol.</text>
</comment>
<comment type="catalytic activity">
    <reaction evidence="1">
        <text>CDP-ethanolamine + a 1,2-diacyl-sn-glycerol = a 1,2-diacyl-sn-glycero-3-phosphoethanolamine + CMP + H(+)</text>
        <dbReference type="Rhea" id="RHEA:32943"/>
        <dbReference type="ChEBI" id="CHEBI:15378"/>
        <dbReference type="ChEBI" id="CHEBI:17815"/>
        <dbReference type="ChEBI" id="CHEBI:57876"/>
        <dbReference type="ChEBI" id="CHEBI:60377"/>
        <dbReference type="ChEBI" id="CHEBI:64612"/>
        <dbReference type="EC" id="2.7.8.1"/>
    </reaction>
    <physiologicalReaction direction="left-to-right" evidence="1">
        <dbReference type="Rhea" id="RHEA:32944"/>
    </physiologicalReaction>
</comment>
<comment type="catalytic activity">
    <reaction evidence="1">
        <text>1-O-alkyl-2-acyl-sn-glycerol + CDP-ethanolamine = a 1-O-alkyl-2-acyl-sn-glycero-3-phosphoethanolamine + CMP + H(+)</text>
        <dbReference type="Rhea" id="RHEA:36187"/>
        <dbReference type="ChEBI" id="CHEBI:15378"/>
        <dbReference type="ChEBI" id="CHEBI:52595"/>
        <dbReference type="ChEBI" id="CHEBI:57876"/>
        <dbReference type="ChEBI" id="CHEBI:60377"/>
        <dbReference type="ChEBI" id="CHEBI:60520"/>
    </reaction>
    <physiologicalReaction direction="left-to-right" evidence="1">
        <dbReference type="Rhea" id="RHEA:36188"/>
    </physiologicalReaction>
</comment>
<comment type="cofactor">
    <cofactor evidence="1">
        <name>Mg(2+)</name>
        <dbReference type="ChEBI" id="CHEBI:18420"/>
    </cofactor>
    <cofactor evidence="1">
        <name>Mn(2+)</name>
        <dbReference type="ChEBI" id="CHEBI:29035"/>
    </cofactor>
</comment>
<comment type="pathway">
    <text evidence="1">Phospholipid metabolism; phosphatidylethanolamine biosynthesis; phosphatidylethanolamine from ethanolamine: step 3/3.</text>
</comment>
<comment type="subcellular location">
    <subcellularLocation>
        <location evidence="1">Endoplasmic reticulum membrane</location>
        <topology evidence="1">Multi-pass membrane protein</topology>
    </subcellularLocation>
</comment>
<comment type="similarity">
    <text evidence="3">Belongs to the CDP-alcohol phosphatidyltransferase class-I family.</text>
</comment>
<protein>
    <recommendedName>
        <fullName evidence="3">Ethanolaminephosphotransferase 1</fullName>
        <ecNumber evidence="1">2.7.8.1</ecNumber>
    </recommendedName>
    <alternativeName>
        <fullName evidence="1">Selenoprotein I</fullName>
        <shortName evidence="1">SelI</shortName>
    </alternativeName>
</protein>
<sequence>MAGYEYVSPEQLAGFDKHKYSAVDTNPLSLYVMHPFWNTIVKVFPTWLAPNLITFSGFLLVVFNFLLMAYFDPDFYASAPGHKHVPDWVWIVVGILNFVAYTLDGVDGKQARRTNSSTPLGELFDHGLDNWSYVYFVVTVYSIFGRGSTGVSVFVLYLLLWVVLFSFILSHWEKYNTGILFLPWGYDISQVTISFVYIVTAVVGVEAWYEPFLFNFLYRDLFTAMIIGCALCVTLPMSLLNFFRSYKNNTLKLNSVYEAMVPLFSPCLLFILSTAWILWSPSDILELHPRVFYFMVGTAFANSTCQLIVCQMSSTRCPTLNWLLVPLFLVVLVVNLGVASYVESILLYTLTTAFTLAHIHYGVRVVKQLSSHFQIYPFSLRKPNSDULGMEEKNIGL</sequence>
<organism>
    <name type="scientific">Pongo abelii</name>
    <name type="common">Sumatran orangutan</name>
    <name type="synonym">Pongo pygmaeus abelii</name>
    <dbReference type="NCBI Taxonomy" id="9601"/>
    <lineage>
        <taxon>Eukaryota</taxon>
        <taxon>Metazoa</taxon>
        <taxon>Chordata</taxon>
        <taxon>Craniata</taxon>
        <taxon>Vertebrata</taxon>
        <taxon>Euteleostomi</taxon>
        <taxon>Mammalia</taxon>
        <taxon>Eutheria</taxon>
        <taxon>Euarchontoglires</taxon>
        <taxon>Primates</taxon>
        <taxon>Haplorrhini</taxon>
        <taxon>Catarrhini</taxon>
        <taxon>Hominidae</taxon>
        <taxon>Pongo</taxon>
    </lineage>
</organism>
<gene>
    <name evidence="1" type="primary">SELENOI</name>
</gene>
<reference key="1">
    <citation type="submission" date="2004-12" db="EMBL/GenBank/DDBJ databases">
        <authorList>
            <consortium name="The German cDNA consortium"/>
        </authorList>
    </citation>
    <scope>NUCLEOTIDE SEQUENCE [LARGE SCALE MRNA]</scope>
    <source>
        <tissue>Kidney</tissue>
    </source>
</reference>